<evidence type="ECO:0000255" key="1"/>
<evidence type="ECO:0000256" key="2">
    <source>
        <dbReference type="SAM" id="MobiDB-lite"/>
    </source>
</evidence>
<evidence type="ECO:0000305" key="3"/>
<protein>
    <recommendedName>
        <fullName>Phosphoenolpyruvate carboxykinase (ATP)</fullName>
        <shortName>PEP carboxykinase</shortName>
        <shortName>PEPCK</shortName>
        <ecNumber>4.1.1.49</ecNumber>
    </recommendedName>
</protein>
<organism>
    <name type="scientific">Zea mays</name>
    <name type="common">Maize</name>
    <dbReference type="NCBI Taxonomy" id="4577"/>
    <lineage>
        <taxon>Eukaryota</taxon>
        <taxon>Viridiplantae</taxon>
        <taxon>Streptophyta</taxon>
        <taxon>Embryophyta</taxon>
        <taxon>Tracheophyta</taxon>
        <taxon>Spermatophyta</taxon>
        <taxon>Magnoliopsida</taxon>
        <taxon>Liliopsida</taxon>
        <taxon>Poales</taxon>
        <taxon>Poaceae</taxon>
        <taxon>PACMAD clade</taxon>
        <taxon>Panicoideae</taxon>
        <taxon>Andropogonodae</taxon>
        <taxon>Andropogoneae</taxon>
        <taxon>Tripsacinae</taxon>
        <taxon>Zea</taxon>
    </lineage>
</organism>
<proteinExistence type="evidence at transcript level"/>
<feature type="chain" id="PRO_0000203864" description="Phosphoenolpyruvate carboxykinase (ATP)">
    <location>
        <begin position="1"/>
        <end position="666"/>
    </location>
</feature>
<feature type="region of interest" description="Disordered" evidence="2">
    <location>
        <begin position="1"/>
        <end position="68"/>
    </location>
</feature>
<feature type="region of interest" description="Disordered" evidence="2">
    <location>
        <begin position="91"/>
        <end position="132"/>
    </location>
</feature>
<feature type="compositionally biased region" description="Polar residues" evidence="2">
    <location>
        <begin position="48"/>
        <end position="58"/>
    </location>
</feature>
<feature type="compositionally biased region" description="Low complexity" evidence="2">
    <location>
        <begin position="109"/>
        <end position="123"/>
    </location>
</feature>
<feature type="binding site" evidence="1">
    <location>
        <begin position="364"/>
        <end position="371"/>
    </location>
    <ligand>
        <name>ATP</name>
        <dbReference type="ChEBI" id="CHEBI:30616"/>
    </ligand>
</feature>
<reference key="1">
    <citation type="journal article" date="1999" name="Plant Mol. Biol.">
        <title>cDNA cloning and characterization of maize phosphoenolpyruvate carboxykinase, a bundle sheath cell-specific enzyme.</title>
        <authorList>
            <person name="Furumoto T."/>
            <person name="Hata S."/>
            <person name="Izui K."/>
        </authorList>
    </citation>
    <scope>NUCLEOTIDE SEQUENCE [MRNA]</scope>
    <source>
        <strain>cv. H84</strain>
        <tissue>Bundle sheath strand</tissue>
    </source>
</reference>
<comment type="catalytic activity">
    <reaction>
        <text>oxaloacetate + ATP = phosphoenolpyruvate + ADP + CO2</text>
        <dbReference type="Rhea" id="RHEA:18617"/>
        <dbReference type="ChEBI" id="CHEBI:16452"/>
        <dbReference type="ChEBI" id="CHEBI:16526"/>
        <dbReference type="ChEBI" id="CHEBI:30616"/>
        <dbReference type="ChEBI" id="CHEBI:58702"/>
        <dbReference type="ChEBI" id="CHEBI:456216"/>
        <dbReference type="EC" id="4.1.1.49"/>
    </reaction>
</comment>
<comment type="pathway">
    <text>Carbohydrate biosynthesis; gluconeogenesis.</text>
</comment>
<comment type="subcellular location">
    <subcellularLocation>
        <location evidence="3">Cytoplasm</location>
    </subcellularLocation>
</comment>
<comment type="similarity">
    <text evidence="3">Belongs to the phosphoenolpyruvate carboxykinase (ATP) family.</text>
</comment>
<dbReference type="EC" id="4.1.1.49"/>
<dbReference type="EMBL" id="AB018744">
    <property type="protein sequence ID" value="BAA36483.1"/>
    <property type="molecule type" value="mRNA"/>
</dbReference>
<dbReference type="SMR" id="Q9SLZ0"/>
<dbReference type="STRING" id="4577.Q9SLZ0"/>
<dbReference type="PaxDb" id="4577-GRMZM2G001696_P02"/>
<dbReference type="eggNOG" id="ENOG502QQI5">
    <property type="taxonomic scope" value="Eukaryota"/>
</dbReference>
<dbReference type="InParanoid" id="Q9SLZ0"/>
<dbReference type="UniPathway" id="UPA00138"/>
<dbReference type="Proteomes" id="UP000007305">
    <property type="component" value="Unplaced"/>
</dbReference>
<dbReference type="ExpressionAtlas" id="Q9SLZ0">
    <property type="expression patterns" value="baseline and differential"/>
</dbReference>
<dbReference type="GO" id="GO:0005829">
    <property type="term" value="C:cytosol"/>
    <property type="evidence" value="ECO:0000318"/>
    <property type="project" value="GO_Central"/>
</dbReference>
<dbReference type="GO" id="GO:0005524">
    <property type="term" value="F:ATP binding"/>
    <property type="evidence" value="ECO:0007669"/>
    <property type="project" value="UniProtKB-KW"/>
</dbReference>
<dbReference type="GO" id="GO:0004612">
    <property type="term" value="F:phosphoenolpyruvate carboxykinase (ATP) activity"/>
    <property type="evidence" value="ECO:0000318"/>
    <property type="project" value="GO_Central"/>
</dbReference>
<dbReference type="GO" id="GO:0006094">
    <property type="term" value="P:gluconeogenesis"/>
    <property type="evidence" value="ECO:0000318"/>
    <property type="project" value="GO_Central"/>
</dbReference>
<dbReference type="CDD" id="cd00484">
    <property type="entry name" value="PEPCK_ATP"/>
    <property type="match status" value="1"/>
</dbReference>
<dbReference type="FunFam" id="2.170.8.10:FF:000001">
    <property type="entry name" value="Phosphoenolpyruvate carboxykinase (ATP)"/>
    <property type="match status" value="1"/>
</dbReference>
<dbReference type="FunFam" id="3.40.449.10:FF:000009">
    <property type="entry name" value="Uncharacterized protein"/>
    <property type="match status" value="1"/>
</dbReference>
<dbReference type="Gene3D" id="3.90.228.20">
    <property type="match status" value="1"/>
</dbReference>
<dbReference type="Gene3D" id="3.40.449.10">
    <property type="entry name" value="Phosphoenolpyruvate Carboxykinase, domain 1"/>
    <property type="match status" value="1"/>
</dbReference>
<dbReference type="Gene3D" id="2.170.8.10">
    <property type="entry name" value="Phosphoenolpyruvate Carboxykinase, domain 2"/>
    <property type="match status" value="1"/>
</dbReference>
<dbReference type="HAMAP" id="MF_00453">
    <property type="entry name" value="PEPCK_ATP"/>
    <property type="match status" value="1"/>
</dbReference>
<dbReference type="InterPro" id="IPR001272">
    <property type="entry name" value="PEP_carboxykinase_ATP"/>
</dbReference>
<dbReference type="InterPro" id="IPR013035">
    <property type="entry name" value="PEP_carboxykinase_C"/>
</dbReference>
<dbReference type="InterPro" id="IPR008210">
    <property type="entry name" value="PEP_carboxykinase_N"/>
</dbReference>
<dbReference type="InterPro" id="IPR015994">
    <property type="entry name" value="PEPCK_ATP_CS"/>
</dbReference>
<dbReference type="NCBIfam" id="TIGR00224">
    <property type="entry name" value="pckA"/>
    <property type="match status" value="1"/>
</dbReference>
<dbReference type="NCBIfam" id="NF006820">
    <property type="entry name" value="PRK09344.1-2"/>
    <property type="match status" value="1"/>
</dbReference>
<dbReference type="NCBIfam" id="NF006821">
    <property type="entry name" value="PRK09344.1-3"/>
    <property type="match status" value="1"/>
</dbReference>
<dbReference type="PANTHER" id="PTHR30031:SF0">
    <property type="entry name" value="PHOSPHOENOLPYRUVATE CARBOXYKINASE (ATP)"/>
    <property type="match status" value="1"/>
</dbReference>
<dbReference type="PANTHER" id="PTHR30031">
    <property type="entry name" value="PHOSPHOENOLPYRUVATE CARBOXYKINASE ATP"/>
    <property type="match status" value="1"/>
</dbReference>
<dbReference type="Pfam" id="PF01293">
    <property type="entry name" value="PEPCK_ATP"/>
    <property type="match status" value="1"/>
</dbReference>
<dbReference type="SUPFAM" id="SSF68923">
    <property type="entry name" value="PEP carboxykinase N-terminal domain"/>
    <property type="match status" value="1"/>
</dbReference>
<dbReference type="SUPFAM" id="SSF53795">
    <property type="entry name" value="PEP carboxykinase-like"/>
    <property type="match status" value="1"/>
</dbReference>
<dbReference type="PROSITE" id="PS00532">
    <property type="entry name" value="PEPCK_ATP"/>
    <property type="match status" value="1"/>
</dbReference>
<keyword id="KW-0067">ATP-binding</keyword>
<keyword id="KW-0963">Cytoplasm</keyword>
<keyword id="KW-0210">Decarboxylase</keyword>
<keyword id="KW-0312">Gluconeogenesis</keyword>
<keyword id="KW-0456">Lyase</keyword>
<keyword id="KW-0547">Nucleotide-binding</keyword>
<keyword id="KW-1185">Reference proteome</keyword>
<name>PCKA_MAIZE</name>
<accession>Q9SLZ0</accession>
<sequence length="666" mass="73314">MATPNGLARIETTGKKKQDNGVWYDDSSAPVRAQTIDELHSLQRKRSAPTTPNRSAPTTPIKGGAHSPFAVAISEEERHTQQMQSISASLASLTRETGPKVVKGDPAAKGEAAAQGAPSTPRAHQQHRHPAAPAIAVSDSSLKFTHVLNNLSPAELYEQAIKYEKGSFITSTGALATLSGAKTGRSPRDKRVVKDEVTAQDLWWGKGSPNIEMDEKTFLINRERAVDYLNSLKVVRQRQLLNWDPENRIKVRIISARAYHSLFMHNMCIRPTDEELEDFGTPDFTIYNAGQFPCNRYTHYMTSSTSIDLNLARREMVIMGTQYAGEMKKGLFGVMHYLMPKRGILSLHSGCNMGKDGDVALFFGLSGTGKTTLSTDHNGLLIGDDEHCWSDNGVSNIEGGCYAKCIDLAQEKEPDIWNAIKFGTVLENVVFDEHTREVDYADYSVTENTRAAYPIEYIPIAKIPCVGPHPKNVILLACDAFGVLPPVSKLILAQTMYHFISGYTALVAGTEDGIKEPQATFSACFGAAFIMLHPTKYAAMLAEKMQKYGATGWLVNTGWSGGRYGVGKRIRLPYTRKIIDAIHSGELLTANYQKTEVFGLEIPTEINGVPSEILDPIYTWTDKAAYKENLLRLGGLFKNNFEVFASYKIGDDSSLTDEILAAGPNF</sequence>